<proteinExistence type="inferred from homology"/>
<protein>
    <recommendedName>
        <fullName evidence="1">Adenine deaminase</fullName>
        <shortName evidence="1">Adenase</shortName>
        <shortName evidence="1">Adenine aminase</shortName>
        <ecNumber evidence="1">3.5.4.2</ecNumber>
    </recommendedName>
</protein>
<sequence>MNNSINHKFHHISRAEYQELLAVSRGDAVADYIIDNVSILDLINGGEISGPIVIKGRYIAGVGAEYTDAPALQRIDAHGATAVPGFIDAHLHIESSMMTPVTFETATLPRGLTTVICDPHEIVNVMGEAGFAWFARCAEQARQNQYLQVSSCVPALEGCDVNGASFTLEQMLAWRDHPQVTGLAEMMDYPGVISGQNALLDKLDAFRHLTLDGHCPGLGGKELNAYIAAGIENCHESYQLEEGRRKLQLGMSLMIREGSAARNLNALAPLINEFNSPQCMLCTDDRNPWEIAHEGHIDALIRRLIEQHNVPLHVAYRVASWSTARHFGLNHLGLLAPGKQADIVLLSDARKVTVQQVLVKGEPIDAQTLQAEESAKLAQSAPPYGNTIARQPVSASDFALQFTPGKRYRVIDVIHNELITHSHSSVYSENGFERNDVCFIAVLERYGQRLAPACGLLGGFGLNEGALAATVSHDSHNIVVIGRSAEEMALAVNQVIQDGGGLCVVRNGQVQSHLPLPIAGLMSTDTAQSLAEQIDALKAAARECGPLPDEPFIQMAFLSLPVIPALKLTSQGLFDGEKFAFTTLEVTE</sequence>
<accession>B5YX72</accession>
<name>ADEC_ECO5E</name>
<feature type="chain" id="PRO_1000146233" description="Adenine deaminase">
    <location>
        <begin position="1"/>
        <end position="588"/>
    </location>
</feature>
<dbReference type="EC" id="3.5.4.2" evidence="1"/>
<dbReference type="EMBL" id="CP001164">
    <property type="protein sequence ID" value="ACI39340.1"/>
    <property type="molecule type" value="Genomic_DNA"/>
</dbReference>
<dbReference type="SMR" id="B5YX72"/>
<dbReference type="KEGG" id="ecf:ECH74115_5095"/>
<dbReference type="HOGENOM" id="CLU_027935_0_0_6"/>
<dbReference type="GO" id="GO:0000034">
    <property type="term" value="F:adenine deaminase activity"/>
    <property type="evidence" value="ECO:0007669"/>
    <property type="project" value="UniProtKB-UniRule"/>
</dbReference>
<dbReference type="GO" id="GO:0006146">
    <property type="term" value="P:adenine catabolic process"/>
    <property type="evidence" value="ECO:0007669"/>
    <property type="project" value="InterPro"/>
</dbReference>
<dbReference type="CDD" id="cd01295">
    <property type="entry name" value="AdeC"/>
    <property type="match status" value="1"/>
</dbReference>
<dbReference type="FunFam" id="3.20.20.140:FF:000016">
    <property type="entry name" value="Adenine deaminase"/>
    <property type="match status" value="1"/>
</dbReference>
<dbReference type="Gene3D" id="3.20.20.140">
    <property type="entry name" value="Metal-dependent hydrolases"/>
    <property type="match status" value="1"/>
</dbReference>
<dbReference type="Gene3D" id="2.30.40.10">
    <property type="entry name" value="Urease, subunit C, domain 1"/>
    <property type="match status" value="1"/>
</dbReference>
<dbReference type="HAMAP" id="MF_01518">
    <property type="entry name" value="Adenine_deamin"/>
    <property type="match status" value="1"/>
</dbReference>
<dbReference type="InterPro" id="IPR006679">
    <property type="entry name" value="Adenine_deam"/>
</dbReference>
<dbReference type="InterPro" id="IPR026912">
    <property type="entry name" value="Adenine_deam_C"/>
</dbReference>
<dbReference type="InterPro" id="IPR006680">
    <property type="entry name" value="Amidohydro-rel"/>
</dbReference>
<dbReference type="InterPro" id="IPR011059">
    <property type="entry name" value="Metal-dep_hydrolase_composite"/>
</dbReference>
<dbReference type="InterPro" id="IPR032466">
    <property type="entry name" value="Metal_Hydrolase"/>
</dbReference>
<dbReference type="NCBIfam" id="TIGR01178">
    <property type="entry name" value="ade"/>
    <property type="match status" value="1"/>
</dbReference>
<dbReference type="NCBIfam" id="NF007457">
    <property type="entry name" value="PRK10027.1"/>
    <property type="match status" value="1"/>
</dbReference>
<dbReference type="PANTHER" id="PTHR11113:SF2">
    <property type="entry name" value="ADENINE DEAMINASE"/>
    <property type="match status" value="1"/>
</dbReference>
<dbReference type="PANTHER" id="PTHR11113">
    <property type="entry name" value="N-ACETYLGLUCOSAMINE-6-PHOSPHATE DEACETYLASE"/>
    <property type="match status" value="1"/>
</dbReference>
<dbReference type="Pfam" id="PF13382">
    <property type="entry name" value="Adenine_deam_C"/>
    <property type="match status" value="1"/>
</dbReference>
<dbReference type="Pfam" id="PF01979">
    <property type="entry name" value="Amidohydro_1"/>
    <property type="match status" value="1"/>
</dbReference>
<dbReference type="SUPFAM" id="SSF51338">
    <property type="entry name" value="Composite domain of metallo-dependent hydrolases"/>
    <property type="match status" value="1"/>
</dbReference>
<dbReference type="SUPFAM" id="SSF51556">
    <property type="entry name" value="Metallo-dependent hydrolases"/>
    <property type="match status" value="1"/>
</dbReference>
<keyword id="KW-0378">Hydrolase</keyword>
<keyword id="KW-0464">Manganese</keyword>
<evidence type="ECO:0000255" key="1">
    <source>
        <dbReference type="HAMAP-Rule" id="MF_01518"/>
    </source>
</evidence>
<gene>
    <name evidence="1" type="primary">ade</name>
    <name type="ordered locus">ECH74115_5095</name>
</gene>
<organism>
    <name type="scientific">Escherichia coli O157:H7 (strain EC4115 / EHEC)</name>
    <dbReference type="NCBI Taxonomy" id="444450"/>
    <lineage>
        <taxon>Bacteria</taxon>
        <taxon>Pseudomonadati</taxon>
        <taxon>Pseudomonadota</taxon>
        <taxon>Gammaproteobacteria</taxon>
        <taxon>Enterobacterales</taxon>
        <taxon>Enterobacteriaceae</taxon>
        <taxon>Escherichia</taxon>
    </lineage>
</organism>
<comment type="catalytic activity">
    <reaction evidence="1">
        <text>adenine + H2O + H(+) = hypoxanthine + NH4(+)</text>
        <dbReference type="Rhea" id="RHEA:23688"/>
        <dbReference type="ChEBI" id="CHEBI:15377"/>
        <dbReference type="ChEBI" id="CHEBI:15378"/>
        <dbReference type="ChEBI" id="CHEBI:16708"/>
        <dbReference type="ChEBI" id="CHEBI:17368"/>
        <dbReference type="ChEBI" id="CHEBI:28938"/>
        <dbReference type="EC" id="3.5.4.2"/>
    </reaction>
</comment>
<comment type="cofactor">
    <cofactor evidence="1">
        <name>Mn(2+)</name>
        <dbReference type="ChEBI" id="CHEBI:29035"/>
    </cofactor>
</comment>
<comment type="subunit">
    <text evidence="1">Homodimer.</text>
</comment>
<comment type="similarity">
    <text evidence="1">Belongs to the metallo-dependent hydrolases superfamily. Adenine deaminase family.</text>
</comment>
<reference key="1">
    <citation type="journal article" date="2011" name="Proc. Natl. Acad. Sci. U.S.A.">
        <title>Genomic anatomy of Escherichia coli O157:H7 outbreaks.</title>
        <authorList>
            <person name="Eppinger M."/>
            <person name="Mammel M.K."/>
            <person name="Leclerc J.E."/>
            <person name="Ravel J."/>
            <person name="Cebula T.A."/>
        </authorList>
    </citation>
    <scope>NUCLEOTIDE SEQUENCE [LARGE SCALE GENOMIC DNA]</scope>
    <source>
        <strain>EC4115 / EHEC</strain>
    </source>
</reference>